<dbReference type="EC" id="2.5.1.7" evidence="1"/>
<dbReference type="EMBL" id="CP000250">
    <property type="protein sequence ID" value="ABD09039.1"/>
    <property type="molecule type" value="Genomic_DNA"/>
</dbReference>
<dbReference type="RefSeq" id="WP_011443223.1">
    <property type="nucleotide sequence ID" value="NC_007778.1"/>
</dbReference>
<dbReference type="SMR" id="Q2IRX1"/>
<dbReference type="STRING" id="316058.RPB_4352"/>
<dbReference type="KEGG" id="rpb:RPB_4352"/>
<dbReference type="eggNOG" id="COG0766">
    <property type="taxonomic scope" value="Bacteria"/>
</dbReference>
<dbReference type="HOGENOM" id="CLU_027387_0_0_5"/>
<dbReference type="OrthoDB" id="9803760at2"/>
<dbReference type="UniPathway" id="UPA00219"/>
<dbReference type="Proteomes" id="UP000008809">
    <property type="component" value="Chromosome"/>
</dbReference>
<dbReference type="GO" id="GO:0005737">
    <property type="term" value="C:cytoplasm"/>
    <property type="evidence" value="ECO:0007669"/>
    <property type="project" value="UniProtKB-SubCell"/>
</dbReference>
<dbReference type="GO" id="GO:0008760">
    <property type="term" value="F:UDP-N-acetylglucosamine 1-carboxyvinyltransferase activity"/>
    <property type="evidence" value="ECO:0007669"/>
    <property type="project" value="UniProtKB-UniRule"/>
</dbReference>
<dbReference type="GO" id="GO:0051301">
    <property type="term" value="P:cell division"/>
    <property type="evidence" value="ECO:0007669"/>
    <property type="project" value="UniProtKB-KW"/>
</dbReference>
<dbReference type="GO" id="GO:0071555">
    <property type="term" value="P:cell wall organization"/>
    <property type="evidence" value="ECO:0007669"/>
    <property type="project" value="UniProtKB-KW"/>
</dbReference>
<dbReference type="GO" id="GO:0009252">
    <property type="term" value="P:peptidoglycan biosynthetic process"/>
    <property type="evidence" value="ECO:0007669"/>
    <property type="project" value="UniProtKB-UniRule"/>
</dbReference>
<dbReference type="GO" id="GO:0008360">
    <property type="term" value="P:regulation of cell shape"/>
    <property type="evidence" value="ECO:0007669"/>
    <property type="project" value="UniProtKB-KW"/>
</dbReference>
<dbReference type="GO" id="GO:0019277">
    <property type="term" value="P:UDP-N-acetylgalactosamine biosynthetic process"/>
    <property type="evidence" value="ECO:0007669"/>
    <property type="project" value="InterPro"/>
</dbReference>
<dbReference type="CDD" id="cd01555">
    <property type="entry name" value="UdpNAET"/>
    <property type="match status" value="1"/>
</dbReference>
<dbReference type="FunFam" id="3.65.10.10:FF:000001">
    <property type="entry name" value="UDP-N-acetylglucosamine 1-carboxyvinyltransferase"/>
    <property type="match status" value="1"/>
</dbReference>
<dbReference type="Gene3D" id="3.65.10.10">
    <property type="entry name" value="Enolpyruvate transferase domain"/>
    <property type="match status" value="2"/>
</dbReference>
<dbReference type="HAMAP" id="MF_00111">
    <property type="entry name" value="MurA"/>
    <property type="match status" value="1"/>
</dbReference>
<dbReference type="InterPro" id="IPR001986">
    <property type="entry name" value="Enolpyruvate_Tfrase_dom"/>
</dbReference>
<dbReference type="InterPro" id="IPR036968">
    <property type="entry name" value="Enolpyruvate_Tfrase_sf"/>
</dbReference>
<dbReference type="InterPro" id="IPR050068">
    <property type="entry name" value="MurA_subfamily"/>
</dbReference>
<dbReference type="InterPro" id="IPR013792">
    <property type="entry name" value="RNA3'P_cycl/enolpyr_Trfase_a/b"/>
</dbReference>
<dbReference type="InterPro" id="IPR005750">
    <property type="entry name" value="UDP_GlcNAc_COvinyl_MurA"/>
</dbReference>
<dbReference type="NCBIfam" id="TIGR01072">
    <property type="entry name" value="murA"/>
    <property type="match status" value="1"/>
</dbReference>
<dbReference type="NCBIfam" id="NF006873">
    <property type="entry name" value="PRK09369.1"/>
    <property type="match status" value="1"/>
</dbReference>
<dbReference type="PANTHER" id="PTHR43783">
    <property type="entry name" value="UDP-N-ACETYLGLUCOSAMINE 1-CARBOXYVINYLTRANSFERASE"/>
    <property type="match status" value="1"/>
</dbReference>
<dbReference type="PANTHER" id="PTHR43783:SF1">
    <property type="entry name" value="UDP-N-ACETYLGLUCOSAMINE 1-CARBOXYVINYLTRANSFERASE"/>
    <property type="match status" value="1"/>
</dbReference>
<dbReference type="Pfam" id="PF00275">
    <property type="entry name" value="EPSP_synthase"/>
    <property type="match status" value="1"/>
</dbReference>
<dbReference type="SUPFAM" id="SSF55205">
    <property type="entry name" value="EPT/RTPC-like"/>
    <property type="match status" value="1"/>
</dbReference>
<evidence type="ECO:0000255" key="1">
    <source>
        <dbReference type="HAMAP-Rule" id="MF_00111"/>
    </source>
</evidence>
<protein>
    <recommendedName>
        <fullName evidence="1">UDP-N-acetylglucosamine 1-carboxyvinyltransferase</fullName>
        <ecNumber evidence="1">2.5.1.7</ecNumber>
    </recommendedName>
    <alternativeName>
        <fullName evidence="1">Enoylpyruvate transferase</fullName>
    </alternativeName>
    <alternativeName>
        <fullName evidence="1">UDP-N-acetylglucosamine enolpyruvyl transferase</fullName>
        <shortName evidence="1">EPT</shortName>
    </alternativeName>
</protein>
<proteinExistence type="inferred from homology"/>
<keyword id="KW-0131">Cell cycle</keyword>
<keyword id="KW-0132">Cell division</keyword>
<keyword id="KW-0133">Cell shape</keyword>
<keyword id="KW-0961">Cell wall biogenesis/degradation</keyword>
<keyword id="KW-0963">Cytoplasm</keyword>
<keyword id="KW-0573">Peptidoglycan synthesis</keyword>
<keyword id="KW-0670">Pyruvate</keyword>
<keyword id="KW-1185">Reference proteome</keyword>
<keyword id="KW-0808">Transferase</keyword>
<reference key="1">
    <citation type="submission" date="2006-01" db="EMBL/GenBank/DDBJ databases">
        <title>Complete sequence of Rhodopseudomonas palustris HaA2.</title>
        <authorList>
            <consortium name="US DOE Joint Genome Institute"/>
            <person name="Copeland A."/>
            <person name="Lucas S."/>
            <person name="Lapidus A."/>
            <person name="Barry K."/>
            <person name="Detter J.C."/>
            <person name="Glavina T."/>
            <person name="Hammon N."/>
            <person name="Israni S."/>
            <person name="Pitluck S."/>
            <person name="Chain P."/>
            <person name="Malfatti S."/>
            <person name="Shin M."/>
            <person name="Vergez L."/>
            <person name="Schmutz J."/>
            <person name="Larimer F."/>
            <person name="Land M."/>
            <person name="Hauser L."/>
            <person name="Pelletier D.A."/>
            <person name="Kyrpides N."/>
            <person name="Anderson I."/>
            <person name="Oda Y."/>
            <person name="Harwood C.S."/>
            <person name="Richardson P."/>
        </authorList>
    </citation>
    <scope>NUCLEOTIDE SEQUENCE [LARGE SCALE GENOMIC DNA]</scope>
    <source>
        <strain>HaA2</strain>
    </source>
</reference>
<accession>Q2IRX1</accession>
<gene>
    <name evidence="1" type="primary">murA</name>
    <name type="ordered locus">RPB_4352</name>
</gene>
<comment type="function">
    <text evidence="1">Cell wall formation. Adds enolpyruvyl to UDP-N-acetylglucosamine.</text>
</comment>
<comment type="catalytic activity">
    <reaction evidence="1">
        <text>phosphoenolpyruvate + UDP-N-acetyl-alpha-D-glucosamine = UDP-N-acetyl-3-O-(1-carboxyvinyl)-alpha-D-glucosamine + phosphate</text>
        <dbReference type="Rhea" id="RHEA:18681"/>
        <dbReference type="ChEBI" id="CHEBI:43474"/>
        <dbReference type="ChEBI" id="CHEBI:57705"/>
        <dbReference type="ChEBI" id="CHEBI:58702"/>
        <dbReference type="ChEBI" id="CHEBI:68483"/>
        <dbReference type="EC" id="2.5.1.7"/>
    </reaction>
</comment>
<comment type="pathway">
    <text evidence="1">Cell wall biogenesis; peptidoglycan biosynthesis.</text>
</comment>
<comment type="subcellular location">
    <subcellularLocation>
        <location evidence="1">Cytoplasm</location>
    </subcellularLocation>
</comment>
<comment type="similarity">
    <text evidence="1">Belongs to the EPSP synthase family. MurA subfamily.</text>
</comment>
<feature type="chain" id="PRO_1000023084" description="UDP-N-acetylglucosamine 1-carboxyvinyltransferase">
    <location>
        <begin position="1"/>
        <end position="429"/>
    </location>
</feature>
<feature type="active site" description="Proton donor" evidence="1">
    <location>
        <position position="126"/>
    </location>
</feature>
<feature type="binding site" evidence="1">
    <location>
        <begin position="22"/>
        <end position="23"/>
    </location>
    <ligand>
        <name>phosphoenolpyruvate</name>
        <dbReference type="ChEBI" id="CHEBI:58702"/>
    </ligand>
</feature>
<feature type="binding site" evidence="1">
    <location>
        <position position="102"/>
    </location>
    <ligand>
        <name>UDP-N-acetyl-alpha-D-glucosamine</name>
        <dbReference type="ChEBI" id="CHEBI:57705"/>
    </ligand>
</feature>
<feature type="binding site" evidence="1">
    <location>
        <begin position="131"/>
        <end position="135"/>
    </location>
    <ligand>
        <name>UDP-N-acetyl-alpha-D-glucosamine</name>
        <dbReference type="ChEBI" id="CHEBI:57705"/>
    </ligand>
</feature>
<feature type="binding site" evidence="1">
    <location>
        <position position="316"/>
    </location>
    <ligand>
        <name>UDP-N-acetyl-alpha-D-glucosamine</name>
        <dbReference type="ChEBI" id="CHEBI:57705"/>
    </ligand>
</feature>
<feature type="binding site" evidence="1">
    <location>
        <position position="338"/>
    </location>
    <ligand>
        <name>UDP-N-acetyl-alpha-D-glucosamine</name>
        <dbReference type="ChEBI" id="CHEBI:57705"/>
    </ligand>
</feature>
<feature type="modified residue" description="2-(S-cysteinyl)pyruvic acid O-phosphothioketal" evidence="1">
    <location>
        <position position="126"/>
    </location>
</feature>
<name>MURA_RHOP2</name>
<sequence>MDRIRIIGGNKLHGTIPISGAKNAALPLMIAALLSDETLILDNVPRLADVALLQRILGNHGVDIMAAGKRPGDHEYQGQTLHISAKNIIDTTAPYELVSKMRASFWVIAPLLARMHEAKVSLPGGCAIGTRPVDLLIMALEKLGVELSIDAGYVVAKAPGGLKGATIEFPKVTVSGTHVALMAATLAKGTTIISNAACEPEITDVADCLNKMGARITGAGTPRILIEGVDKLHGARHTVLPDRIETGTYAMAVAMTGGEVQLSGARPELLQSALDVLTQAGATITINNDGIKVARNGAGISPVTVTTAPFPGFPTDLQAQLMALMTRAKGASHITETIFENRFMHVQELARFGAKISLDGETATIDGVTKLRGAPVMATDLRASVSLVIAALAAEGETMVNRIYHLDRGFERLEEKLSACGATIERISG</sequence>
<organism>
    <name type="scientific">Rhodopseudomonas palustris (strain HaA2)</name>
    <dbReference type="NCBI Taxonomy" id="316058"/>
    <lineage>
        <taxon>Bacteria</taxon>
        <taxon>Pseudomonadati</taxon>
        <taxon>Pseudomonadota</taxon>
        <taxon>Alphaproteobacteria</taxon>
        <taxon>Hyphomicrobiales</taxon>
        <taxon>Nitrobacteraceae</taxon>
        <taxon>Rhodopseudomonas</taxon>
    </lineage>
</organism>